<reference key="1">
    <citation type="journal article" date="1993" name="J. Biol. Chem.">
        <title>The expression of saporin, a ribosome-inactivating protein from the plant Saponaria officinalis, in Escherichia coli.</title>
        <authorList>
            <person name="Barthelemy I."/>
            <person name="Martineau D."/>
            <person name="Ong M."/>
            <person name="Matsunami R."/>
            <person name="Ling N."/>
            <person name="Benatti L."/>
            <person name="Cavallaro U."/>
            <person name="Soria M."/>
            <person name="Lappi D.A."/>
        </authorList>
    </citation>
    <scope>NUCLEOTIDE SEQUENCE [GENOMIC DNA]</scope>
    <source>
        <tissue>Leaf</tissue>
    </source>
</reference>
<keyword id="KW-0378">Hydrolase</keyword>
<keyword id="KW-0611">Plant defense</keyword>
<keyword id="KW-0652">Protein synthesis inhibitor</keyword>
<keyword id="KW-0800">Toxin</keyword>
<sequence length="253" mass="28553">VTSITLDLVNPTAGQYSSFVDKIRNNVKDPNLKYGGTDIAVIGPPSKEKFLRINFQSSRGTVSLGLKRDNLYVVAYLAMDNTNVNRAYYFRSEITSAELTALFPEATTANQKALEYTEDYQSIEKNAQITQGDKSRKELGLGIDLLLTSMEAVNKKARVVKNEARFLLIAIQMTAEAARFRYIQNLVIKNFPNKFNSENKVIQFEVNWKKISTAIYGDAKNGVFNKDYDFGFGKVRQVKDLQMGLLMYLGKPK</sequence>
<accession>Q41391</accession>
<gene>
    <name type="primary">SAP7</name>
</gene>
<evidence type="ECO:0000250" key="1"/>
<evidence type="ECO:0000305" key="2"/>
<protein>
    <recommendedName>
        <fullName>Ribosome-inactivating protein saporin-7</fullName>
        <shortName>SAP-7</shortName>
        <shortName>SO-7</shortName>
        <ecNumber>3.2.2.22</ecNumber>
    </recommendedName>
    <alternativeName>
        <fullName>rRNA N-glycosidase</fullName>
    </alternativeName>
</protein>
<feature type="chain" id="PRO_0000221414" description="Ribosome-inactivating protein saporin-7">
    <location>
        <begin position="1"/>
        <end position="253"/>
    </location>
</feature>
<feature type="active site" evidence="1">
    <location>
        <position position="176"/>
    </location>
</feature>
<comment type="function">
    <text evidence="1">Ribosome-inactivating protein of type 1, inhibits protein synthesis in animal cells.</text>
</comment>
<comment type="catalytic activity">
    <reaction>
        <text>Endohydrolysis of the N-glycosidic bond at one specific adenosine on the 28S rRNA.</text>
        <dbReference type="EC" id="3.2.2.22"/>
    </reaction>
</comment>
<comment type="similarity">
    <text evidence="2">Belongs to the ribosome-inactivating protein family. Type 1 RIP subfamily.</text>
</comment>
<name>RIP7_SAPOF</name>
<organism>
    <name type="scientific">Saponaria officinalis</name>
    <name type="common">Common soapwort</name>
    <name type="synonym">Lychnis saponaria</name>
    <dbReference type="NCBI Taxonomy" id="3572"/>
    <lineage>
        <taxon>Eukaryota</taxon>
        <taxon>Viridiplantae</taxon>
        <taxon>Streptophyta</taxon>
        <taxon>Embryophyta</taxon>
        <taxon>Tracheophyta</taxon>
        <taxon>Spermatophyta</taxon>
        <taxon>Magnoliopsida</taxon>
        <taxon>eudicotyledons</taxon>
        <taxon>Gunneridae</taxon>
        <taxon>Pentapetalae</taxon>
        <taxon>Caryophyllales</taxon>
        <taxon>Caryophyllaceae</taxon>
        <taxon>Caryophylleae</taxon>
        <taxon>Saponaria</taxon>
    </lineage>
</organism>
<dbReference type="EC" id="3.2.2.22"/>
<dbReference type="EMBL" id="X69134">
    <property type="protein sequence ID" value="CAA48888.1"/>
    <property type="molecule type" value="Genomic_DNA"/>
</dbReference>
<dbReference type="PIR" id="S16487">
    <property type="entry name" value="S16487"/>
</dbReference>
<dbReference type="PIR" id="S28542">
    <property type="entry name" value="S28542"/>
</dbReference>
<dbReference type="PIR" id="S38527">
    <property type="entry name" value="S38527"/>
</dbReference>
<dbReference type="SMR" id="Q41391"/>
<dbReference type="Allergome" id="2805">
    <property type="allergen name" value="Sap o RIP"/>
</dbReference>
<dbReference type="GO" id="GO:0030598">
    <property type="term" value="F:rRNA N-glycosylase activity"/>
    <property type="evidence" value="ECO:0007669"/>
    <property type="project" value="UniProtKB-EC"/>
</dbReference>
<dbReference type="GO" id="GO:0090729">
    <property type="term" value="F:toxin activity"/>
    <property type="evidence" value="ECO:0007669"/>
    <property type="project" value="UniProtKB-KW"/>
</dbReference>
<dbReference type="GO" id="GO:0006952">
    <property type="term" value="P:defense response"/>
    <property type="evidence" value="ECO:0007669"/>
    <property type="project" value="UniProtKB-KW"/>
</dbReference>
<dbReference type="GO" id="GO:0017148">
    <property type="term" value="P:negative regulation of translation"/>
    <property type="evidence" value="ECO:0007669"/>
    <property type="project" value="UniProtKB-KW"/>
</dbReference>
<dbReference type="Gene3D" id="3.40.420.10">
    <property type="entry name" value="Ricin (A subunit), domain 1"/>
    <property type="match status" value="1"/>
</dbReference>
<dbReference type="Gene3D" id="4.10.470.10">
    <property type="entry name" value="Ricin (A Subunit), domain 2"/>
    <property type="match status" value="1"/>
</dbReference>
<dbReference type="InterPro" id="IPR036041">
    <property type="entry name" value="Ribosome-inact_prot_sf"/>
</dbReference>
<dbReference type="InterPro" id="IPR017989">
    <property type="entry name" value="Ribosome_inactivat_1/2"/>
</dbReference>
<dbReference type="InterPro" id="IPR001574">
    <property type="entry name" value="Ribosome_inactivat_prot"/>
</dbReference>
<dbReference type="InterPro" id="IPR017988">
    <property type="entry name" value="Ribosome_inactivat_prot_CS"/>
</dbReference>
<dbReference type="InterPro" id="IPR016138">
    <property type="entry name" value="Ribosome_inactivat_prot_sub1"/>
</dbReference>
<dbReference type="InterPro" id="IPR016139">
    <property type="entry name" value="Ribosome_inactivat_prot_sub2"/>
</dbReference>
<dbReference type="PANTHER" id="PTHR33453">
    <property type="match status" value="1"/>
</dbReference>
<dbReference type="PANTHER" id="PTHR33453:SF34">
    <property type="entry name" value="RIBOSOME-INACTIVATING PROTEIN"/>
    <property type="match status" value="1"/>
</dbReference>
<dbReference type="Pfam" id="PF00161">
    <property type="entry name" value="RIP"/>
    <property type="match status" value="1"/>
</dbReference>
<dbReference type="PRINTS" id="PR00396">
    <property type="entry name" value="SHIGARICIN"/>
</dbReference>
<dbReference type="SUPFAM" id="SSF56371">
    <property type="entry name" value="Ribosome inactivating proteins (RIP)"/>
    <property type="match status" value="1"/>
</dbReference>
<dbReference type="PROSITE" id="PS00275">
    <property type="entry name" value="SHIGA_RICIN"/>
    <property type="match status" value="1"/>
</dbReference>
<proteinExistence type="inferred from homology"/>